<gene>
    <name evidence="1" type="primary">hldE</name>
    <name type="ordered locus">CBUD_0342</name>
</gene>
<proteinExistence type="inferred from homology"/>
<reference key="1">
    <citation type="journal article" date="2009" name="Infect. Immun.">
        <title>Comparative genomics reveal extensive transposon-mediated genomic plasticity and diversity among potential effector proteins within the genus Coxiella.</title>
        <authorList>
            <person name="Beare P.A."/>
            <person name="Unsworth N."/>
            <person name="Andoh M."/>
            <person name="Voth D.E."/>
            <person name="Omsland A."/>
            <person name="Gilk S.D."/>
            <person name="Williams K.P."/>
            <person name="Sobral B.W."/>
            <person name="Kupko J.J. III"/>
            <person name="Porcella S.F."/>
            <person name="Samuel J.E."/>
            <person name="Heinzen R.A."/>
        </authorList>
    </citation>
    <scope>NUCLEOTIDE SEQUENCE [LARGE SCALE GENOMIC DNA]</scope>
    <source>
        <strain>Dugway 5J108-111</strain>
    </source>
</reference>
<name>HLDE_COXBN</name>
<comment type="function">
    <text evidence="1">Catalyzes the phosphorylation of D-glycero-D-manno-heptose 7-phosphate at the C-1 position to selectively form D-glycero-beta-D-manno-heptose-1,7-bisphosphate.</text>
</comment>
<comment type="function">
    <text evidence="1">Catalyzes the ADP transfer from ATP to D-glycero-beta-D-manno-heptose 1-phosphate, yielding ADP-D-glycero-beta-D-manno-heptose.</text>
</comment>
<comment type="catalytic activity">
    <reaction evidence="1">
        <text>D-glycero-beta-D-manno-heptose 7-phosphate + ATP = D-glycero-beta-D-manno-heptose 1,7-bisphosphate + ADP + H(+)</text>
        <dbReference type="Rhea" id="RHEA:27473"/>
        <dbReference type="ChEBI" id="CHEBI:15378"/>
        <dbReference type="ChEBI" id="CHEBI:30616"/>
        <dbReference type="ChEBI" id="CHEBI:60204"/>
        <dbReference type="ChEBI" id="CHEBI:60208"/>
        <dbReference type="ChEBI" id="CHEBI:456216"/>
        <dbReference type="EC" id="2.7.1.167"/>
    </reaction>
</comment>
<comment type="catalytic activity">
    <reaction evidence="1">
        <text>D-glycero-beta-D-manno-heptose 1-phosphate + ATP + H(+) = ADP-D-glycero-beta-D-manno-heptose + diphosphate</text>
        <dbReference type="Rhea" id="RHEA:27465"/>
        <dbReference type="ChEBI" id="CHEBI:15378"/>
        <dbReference type="ChEBI" id="CHEBI:30616"/>
        <dbReference type="ChEBI" id="CHEBI:33019"/>
        <dbReference type="ChEBI" id="CHEBI:59967"/>
        <dbReference type="ChEBI" id="CHEBI:61593"/>
        <dbReference type="EC" id="2.7.7.70"/>
    </reaction>
</comment>
<comment type="pathway">
    <text evidence="1">Nucleotide-sugar biosynthesis; ADP-L-glycero-beta-D-manno-heptose biosynthesis; ADP-L-glycero-beta-D-manno-heptose from D-glycero-beta-D-manno-heptose 7-phosphate: step 1/4.</text>
</comment>
<comment type="pathway">
    <text evidence="1">Nucleotide-sugar biosynthesis; ADP-L-glycero-beta-D-manno-heptose biosynthesis; ADP-L-glycero-beta-D-manno-heptose from D-glycero-beta-D-manno-heptose 7-phosphate: step 3/4.</text>
</comment>
<comment type="subunit">
    <text evidence="1">Homodimer.</text>
</comment>
<comment type="similarity">
    <text evidence="1">In the N-terminal section; belongs to the carbohydrate kinase PfkB family.</text>
</comment>
<comment type="similarity">
    <text evidence="1">In the C-terminal section; belongs to the cytidylyltransferase family.</text>
</comment>
<comment type="sequence caution" evidence="2">
    <conflict type="erroneous initiation">
        <sequence resource="EMBL-CDS" id="ABS76500"/>
    </conflict>
</comment>
<feature type="chain" id="PRO_1000088019" description="Bifunctional protein HldE">
    <location>
        <begin position="1"/>
        <end position="475"/>
    </location>
</feature>
<feature type="region of interest" description="Ribokinase">
    <location>
        <begin position="1"/>
        <end position="321"/>
    </location>
</feature>
<feature type="region of interest" description="Cytidylyltransferase">
    <location>
        <begin position="346"/>
        <end position="475"/>
    </location>
</feature>
<feature type="active site" evidence="1">
    <location>
        <position position="266"/>
    </location>
</feature>
<feature type="binding site" evidence="1">
    <location>
        <begin position="197"/>
        <end position="200"/>
    </location>
    <ligand>
        <name>ATP</name>
        <dbReference type="ChEBI" id="CHEBI:30616"/>
    </ligand>
</feature>
<keyword id="KW-0067">ATP-binding</keyword>
<keyword id="KW-0119">Carbohydrate metabolism</keyword>
<keyword id="KW-0418">Kinase</keyword>
<keyword id="KW-0511">Multifunctional enzyme</keyword>
<keyword id="KW-0547">Nucleotide-binding</keyword>
<keyword id="KW-0548">Nucleotidyltransferase</keyword>
<keyword id="KW-0808">Transferase</keyword>
<organism>
    <name type="scientific">Coxiella burnetii (strain Dugway 5J108-111)</name>
    <dbReference type="NCBI Taxonomy" id="434922"/>
    <lineage>
        <taxon>Bacteria</taxon>
        <taxon>Pseudomonadati</taxon>
        <taxon>Pseudomonadota</taxon>
        <taxon>Gammaproteobacteria</taxon>
        <taxon>Legionellales</taxon>
        <taxon>Coxiellaceae</taxon>
        <taxon>Coxiella</taxon>
    </lineage>
</organism>
<dbReference type="EC" id="2.7.1.167" evidence="1"/>
<dbReference type="EC" id="2.7.7.70" evidence="1"/>
<dbReference type="EMBL" id="CP000733">
    <property type="protein sequence ID" value="ABS76500.2"/>
    <property type="status" value="ALT_INIT"/>
    <property type="molecule type" value="Genomic_DNA"/>
</dbReference>
<dbReference type="SMR" id="A9KDJ2"/>
<dbReference type="KEGG" id="cbd:CBUD_0342"/>
<dbReference type="HOGENOM" id="CLU_021150_2_1_6"/>
<dbReference type="UniPathway" id="UPA00356">
    <property type="reaction ID" value="UER00437"/>
</dbReference>
<dbReference type="UniPathway" id="UPA00356">
    <property type="reaction ID" value="UER00439"/>
</dbReference>
<dbReference type="Proteomes" id="UP000008555">
    <property type="component" value="Chromosome"/>
</dbReference>
<dbReference type="GO" id="GO:0005829">
    <property type="term" value="C:cytosol"/>
    <property type="evidence" value="ECO:0007669"/>
    <property type="project" value="TreeGrafter"/>
</dbReference>
<dbReference type="GO" id="GO:0005524">
    <property type="term" value="F:ATP binding"/>
    <property type="evidence" value="ECO:0007669"/>
    <property type="project" value="UniProtKB-UniRule"/>
</dbReference>
<dbReference type="GO" id="GO:0033785">
    <property type="term" value="F:heptose 7-phosphate kinase activity"/>
    <property type="evidence" value="ECO:0007669"/>
    <property type="project" value="UniProtKB-UniRule"/>
</dbReference>
<dbReference type="GO" id="GO:0033786">
    <property type="term" value="F:heptose-1-phosphate adenylyltransferase activity"/>
    <property type="evidence" value="ECO:0007669"/>
    <property type="project" value="UniProtKB-UniRule"/>
</dbReference>
<dbReference type="GO" id="GO:0016773">
    <property type="term" value="F:phosphotransferase activity, alcohol group as acceptor"/>
    <property type="evidence" value="ECO:0007669"/>
    <property type="project" value="InterPro"/>
</dbReference>
<dbReference type="GO" id="GO:0097171">
    <property type="term" value="P:ADP-L-glycero-beta-D-manno-heptose biosynthetic process"/>
    <property type="evidence" value="ECO:0007669"/>
    <property type="project" value="UniProtKB-UniPathway"/>
</dbReference>
<dbReference type="CDD" id="cd01172">
    <property type="entry name" value="RfaE_like"/>
    <property type="match status" value="1"/>
</dbReference>
<dbReference type="FunFam" id="3.40.1190.20:FF:000002">
    <property type="entry name" value="Bifunctional protein HldE"/>
    <property type="match status" value="1"/>
</dbReference>
<dbReference type="FunFam" id="3.40.50.620:FF:000028">
    <property type="entry name" value="Bifunctional protein HldE"/>
    <property type="match status" value="1"/>
</dbReference>
<dbReference type="Gene3D" id="3.40.1190.20">
    <property type="match status" value="1"/>
</dbReference>
<dbReference type="Gene3D" id="3.40.50.620">
    <property type="entry name" value="HUPs"/>
    <property type="match status" value="1"/>
</dbReference>
<dbReference type="HAMAP" id="MF_01603">
    <property type="entry name" value="HldE"/>
    <property type="match status" value="1"/>
</dbReference>
<dbReference type="InterPro" id="IPR023030">
    <property type="entry name" value="Bifunc_HldE"/>
</dbReference>
<dbReference type="InterPro" id="IPR002173">
    <property type="entry name" value="Carboh/pur_kinase_PfkB_CS"/>
</dbReference>
<dbReference type="InterPro" id="IPR004821">
    <property type="entry name" value="Cyt_trans-like"/>
</dbReference>
<dbReference type="InterPro" id="IPR011611">
    <property type="entry name" value="PfkB_dom"/>
</dbReference>
<dbReference type="InterPro" id="IPR011913">
    <property type="entry name" value="RfaE_dom_I"/>
</dbReference>
<dbReference type="InterPro" id="IPR011914">
    <property type="entry name" value="RfaE_dom_II"/>
</dbReference>
<dbReference type="InterPro" id="IPR029056">
    <property type="entry name" value="Ribokinase-like"/>
</dbReference>
<dbReference type="InterPro" id="IPR014729">
    <property type="entry name" value="Rossmann-like_a/b/a_fold"/>
</dbReference>
<dbReference type="NCBIfam" id="TIGR00125">
    <property type="entry name" value="cyt_tran_rel"/>
    <property type="match status" value="1"/>
</dbReference>
<dbReference type="NCBIfam" id="NF008454">
    <property type="entry name" value="PRK11316.1"/>
    <property type="match status" value="1"/>
</dbReference>
<dbReference type="NCBIfam" id="TIGR02198">
    <property type="entry name" value="rfaE_dom_I"/>
    <property type="match status" value="1"/>
</dbReference>
<dbReference type="NCBIfam" id="TIGR02199">
    <property type="entry name" value="rfaE_dom_II"/>
    <property type="match status" value="1"/>
</dbReference>
<dbReference type="PANTHER" id="PTHR46969">
    <property type="entry name" value="BIFUNCTIONAL PROTEIN HLDE"/>
    <property type="match status" value="1"/>
</dbReference>
<dbReference type="PANTHER" id="PTHR46969:SF1">
    <property type="entry name" value="BIFUNCTIONAL PROTEIN HLDE"/>
    <property type="match status" value="1"/>
</dbReference>
<dbReference type="Pfam" id="PF01467">
    <property type="entry name" value="CTP_transf_like"/>
    <property type="match status" value="1"/>
</dbReference>
<dbReference type="Pfam" id="PF00294">
    <property type="entry name" value="PfkB"/>
    <property type="match status" value="1"/>
</dbReference>
<dbReference type="SUPFAM" id="SSF52374">
    <property type="entry name" value="Nucleotidylyl transferase"/>
    <property type="match status" value="1"/>
</dbReference>
<dbReference type="SUPFAM" id="SSF53613">
    <property type="entry name" value="Ribokinase-like"/>
    <property type="match status" value="1"/>
</dbReference>
<dbReference type="PROSITE" id="PS00583">
    <property type="entry name" value="PFKB_KINASES_1"/>
    <property type="match status" value="1"/>
</dbReference>
<protein>
    <recommendedName>
        <fullName evidence="1">Bifunctional protein HldE</fullName>
    </recommendedName>
    <domain>
        <recommendedName>
            <fullName evidence="1">D-beta-D-heptose 7-phosphate kinase</fullName>
            <ecNumber evidence="1">2.7.1.167</ecNumber>
        </recommendedName>
        <alternativeName>
            <fullName evidence="1">D-beta-D-heptose 7-phosphotransferase</fullName>
        </alternativeName>
        <alternativeName>
            <fullName evidence="1">D-glycero-beta-D-manno-heptose-7-phosphate kinase</fullName>
        </alternativeName>
    </domain>
    <domain>
        <recommendedName>
            <fullName evidence="1">D-beta-D-heptose 1-phosphate adenylyltransferase</fullName>
            <ecNumber evidence="1">2.7.7.70</ecNumber>
        </recommendedName>
        <alternativeName>
            <fullName evidence="1">D-glycero-beta-D-manno-heptose 1-phosphate adenylyltransferase</fullName>
        </alternativeName>
    </domain>
</protein>
<sequence length="475" mass="51906">MADKIDISLYEKARIVVYGDIMLDRYWYGQASRISPEAPIPVVNVDQIEARPGGAANVALNVVALGASVELMGVVGDDQESRELETLLNKKSINCHFHRLNDHPTVTKLRVLGQNQQLLRLDFEKTLKHYEDKGLLQRYQHSLSHAQAVILSDYAKGALFNVTALIQRAREKGLPVLVDPKSVDFSRYAGATLLTPNLKEFEAVVGHCRTDQELESKARALIHQYRFEAILITRGKQGMMLIQKEGAAINLVAHAREVYDVTGAGDTVIAVMAASLAAGGDFYEAAQLANLAAGLVVRKLGAATVTVPELRRALHQITASHHGILSEKALLLAVADARAHGETIVMTNGCFDILHAGHVHYLEAAKAMGHRLIVAVNDDNSVRRLKGKDRPINSLQARMEVLTALRAIDWVVPFSEDTPARLITEVLPNILVKGGDYQPSQIAGGDEVVKNGGKVLTIPIKEGFSTSRLVEKMLN</sequence>
<evidence type="ECO:0000255" key="1">
    <source>
        <dbReference type="HAMAP-Rule" id="MF_01603"/>
    </source>
</evidence>
<evidence type="ECO:0000305" key="2"/>
<accession>A9KDJ2</accession>